<evidence type="ECO:0000250" key="1"/>
<evidence type="ECO:0000255" key="2"/>
<evidence type="ECO:0000305" key="3"/>
<sequence>MGLLICSLLLGLLCCSMAKDTPPKVEVYTREPEEFGKPNSFICHVSGFYPPQINITLLKDGKEIPNTQQTDLAFEANWYYYLTKHVSFTPKEDDEFICRVTHMGKSKDHFLMIGL</sequence>
<organism>
    <name type="scientific">Paralichthys olivaceus</name>
    <name type="common">Bastard halibut</name>
    <name type="synonym">Hippoglossus olivaceus</name>
    <dbReference type="NCBI Taxonomy" id="8255"/>
    <lineage>
        <taxon>Eukaryota</taxon>
        <taxon>Metazoa</taxon>
        <taxon>Chordata</taxon>
        <taxon>Craniata</taxon>
        <taxon>Vertebrata</taxon>
        <taxon>Euteleostomi</taxon>
        <taxon>Actinopterygii</taxon>
        <taxon>Neopterygii</taxon>
        <taxon>Teleostei</taxon>
        <taxon>Neoteleostei</taxon>
        <taxon>Acanthomorphata</taxon>
        <taxon>Carangaria</taxon>
        <taxon>Pleuronectiformes</taxon>
        <taxon>Pleuronectoidei</taxon>
        <taxon>Paralichthyidae</taxon>
        <taxon>Paralichthys</taxon>
    </lineage>
</organism>
<reference key="1">
    <citation type="submission" date="2001-10" db="EMBL/GenBank/DDBJ databases">
        <authorList>
            <person name="Kim D.H."/>
            <person name="Lee E.Y."/>
            <person name="Choi T.J."/>
        </authorList>
    </citation>
    <scope>NUCLEOTIDE SEQUENCE [MRNA]</scope>
</reference>
<gene>
    <name type="primary">b2m</name>
</gene>
<name>B2MG_PAROL</name>
<keyword id="KW-0391">Immunity</keyword>
<keyword id="KW-0393">Immunoglobulin domain</keyword>
<keyword id="KW-0490">MHC I</keyword>
<keyword id="KW-0964">Secreted</keyword>
<keyword id="KW-0732">Signal</keyword>
<comment type="function">
    <text evidence="1">Component of the class I major histocompatibility complex (MHC). Involved in the presentation of peptide antigens to the immune system (By similarity).</text>
</comment>
<comment type="subunit">
    <text evidence="1">Heterodimer of an alpha chain and a beta chain. Beta-2-microglobulin is the beta-chain of major histocompatibility complex class I molecules (By similarity).</text>
</comment>
<comment type="subcellular location">
    <subcellularLocation>
        <location evidence="1">Secreted</location>
    </subcellularLocation>
</comment>
<comment type="similarity">
    <text evidence="3">Belongs to the beta-2-microglobulin family.</text>
</comment>
<accession>Q8AYH8</accession>
<dbReference type="EMBL" id="AF433657">
    <property type="protein sequence ID" value="AAN40738.1"/>
    <property type="molecule type" value="mRNA"/>
</dbReference>
<dbReference type="RefSeq" id="XP_019955580.1">
    <property type="nucleotide sequence ID" value="XM_020100021.1"/>
</dbReference>
<dbReference type="SMR" id="Q8AYH8"/>
<dbReference type="GeneID" id="109637565"/>
<dbReference type="KEGG" id="pov:109637565"/>
<dbReference type="GO" id="GO:0005576">
    <property type="term" value="C:extracellular region"/>
    <property type="evidence" value="ECO:0007669"/>
    <property type="project" value="UniProtKB-SubCell"/>
</dbReference>
<dbReference type="GO" id="GO:0042612">
    <property type="term" value="C:MHC class I protein complex"/>
    <property type="evidence" value="ECO:0007669"/>
    <property type="project" value="UniProtKB-KW"/>
</dbReference>
<dbReference type="GO" id="GO:0002474">
    <property type="term" value="P:antigen processing and presentation of peptide antigen via MHC class I"/>
    <property type="evidence" value="ECO:0007669"/>
    <property type="project" value="UniProtKB-KW"/>
</dbReference>
<dbReference type="FunFam" id="2.60.40.10:FF:001005">
    <property type="entry name" value="Beta-2-microglobulin"/>
    <property type="match status" value="1"/>
</dbReference>
<dbReference type="Gene3D" id="2.60.40.10">
    <property type="entry name" value="Immunoglobulins"/>
    <property type="match status" value="1"/>
</dbReference>
<dbReference type="InterPro" id="IPR007110">
    <property type="entry name" value="Ig-like_dom"/>
</dbReference>
<dbReference type="InterPro" id="IPR036179">
    <property type="entry name" value="Ig-like_dom_sf"/>
</dbReference>
<dbReference type="InterPro" id="IPR013783">
    <property type="entry name" value="Ig-like_fold"/>
</dbReference>
<dbReference type="InterPro" id="IPR003006">
    <property type="entry name" value="Ig/MHC_CS"/>
</dbReference>
<dbReference type="InterPro" id="IPR003597">
    <property type="entry name" value="Ig_C1-set"/>
</dbReference>
<dbReference type="InterPro" id="IPR050160">
    <property type="entry name" value="MHC/Immunoglobulin"/>
</dbReference>
<dbReference type="PANTHER" id="PTHR19944:SF62">
    <property type="entry name" value="BETA-2-MICROGLOBULIN"/>
    <property type="match status" value="1"/>
</dbReference>
<dbReference type="PANTHER" id="PTHR19944">
    <property type="entry name" value="MHC CLASS II-RELATED"/>
    <property type="match status" value="1"/>
</dbReference>
<dbReference type="Pfam" id="PF07654">
    <property type="entry name" value="C1-set"/>
    <property type="match status" value="1"/>
</dbReference>
<dbReference type="SMART" id="SM00407">
    <property type="entry name" value="IGc1"/>
    <property type="match status" value="1"/>
</dbReference>
<dbReference type="SUPFAM" id="SSF48726">
    <property type="entry name" value="Immunoglobulin"/>
    <property type="match status" value="1"/>
</dbReference>
<dbReference type="PROSITE" id="PS50835">
    <property type="entry name" value="IG_LIKE"/>
    <property type="match status" value="1"/>
</dbReference>
<dbReference type="PROSITE" id="PS00290">
    <property type="entry name" value="IG_MHC"/>
    <property type="match status" value="1"/>
</dbReference>
<protein>
    <recommendedName>
        <fullName>Beta-2-microglobulin</fullName>
    </recommendedName>
</protein>
<feature type="signal peptide" evidence="2">
    <location>
        <begin position="1"/>
        <end position="18"/>
    </location>
</feature>
<feature type="chain" id="PRO_0000018810" description="Beta-2-microglobulin">
    <location>
        <begin position="19"/>
        <end position="115"/>
    </location>
</feature>
<feature type="domain" description="Ig-like C1-type">
    <location>
        <begin position="23"/>
        <end position="114"/>
    </location>
</feature>
<proteinExistence type="inferred from homology"/>